<gene>
    <name type="primary">M</name>
</gene>
<comment type="function">
    <text>The M protein has a crucial role in virus assembly and interacts with the RNP complex as well as with the viral membrane.</text>
</comment>
<comment type="subcellular location">
    <subcellularLocation>
        <location evidence="1">Virion</location>
    </subcellularLocation>
</comment>
<comment type="similarity">
    <text evidence="1">Belongs to the morbillivirus/respirovirus/rubulavirus M protein family.</text>
</comment>
<sequence length="348" mass="38445">MAETYRFPRFSHEENGTVEPLPLKTGPDKKAIPHIRIVKVGDPPKHGVRYLDVLLLGFFETPKQGPLSGSISDLTESTSYSICGSGSLPIGIAKYYGTDQELLKACIDLKITVRRTVRSGEMIVYMVDSIHAPLLPWSSRLRQGMIYNANKVALAPQCLPVDKDIRFRVVFVNGTSLGTITIAKVPKTLADLALPNSISVNLLVTLKAGVSTEQKGILPVLDDDGEKKLNFMVHLGIIRRKVGKIYSVEYCKNKIEKMKLIFSLGLVGGISFHVHATGTLSKTLMSQLAWKKAVCYPLMDLNPHMNLVIWAASVEITSVDAVFQPAIPKEFRYYPNVVAKSIGKIRKI</sequence>
<protein>
    <recommendedName>
        <fullName>Matrix protein</fullName>
    </recommendedName>
</protein>
<proteinExistence type="inferred from homology"/>
<dbReference type="EMBL" id="S38067">
    <property type="protein sequence ID" value="AAB22344.1"/>
    <property type="molecule type" value="Genomic_RNA"/>
</dbReference>
<dbReference type="PIR" id="B48341">
    <property type="entry name" value="B48341"/>
</dbReference>
<dbReference type="SMR" id="P36355"/>
<dbReference type="GO" id="GO:0019031">
    <property type="term" value="C:viral envelope"/>
    <property type="evidence" value="ECO:0007669"/>
    <property type="project" value="UniProtKB-KW"/>
</dbReference>
<dbReference type="GO" id="GO:0039660">
    <property type="term" value="F:structural constituent of virion"/>
    <property type="evidence" value="ECO:0007669"/>
    <property type="project" value="UniProtKB-KW"/>
</dbReference>
<dbReference type="GO" id="GO:0019068">
    <property type="term" value="P:virion assembly"/>
    <property type="evidence" value="ECO:0007669"/>
    <property type="project" value="InterPro"/>
</dbReference>
<dbReference type="Gene3D" id="2.70.20.60">
    <property type="entry name" value="Viral matrix protein, C-terminal domain"/>
    <property type="match status" value="1"/>
</dbReference>
<dbReference type="Gene3D" id="2.70.20.50">
    <property type="entry name" value="Viral matrix protein, N-terminal domain"/>
    <property type="match status" value="1"/>
</dbReference>
<dbReference type="InterPro" id="IPR042539">
    <property type="entry name" value="Matrix_C"/>
</dbReference>
<dbReference type="InterPro" id="IPR042540">
    <property type="entry name" value="Matrix_N"/>
</dbReference>
<dbReference type="InterPro" id="IPR055413">
    <property type="entry name" value="Matrix_Paramyxo_C"/>
</dbReference>
<dbReference type="InterPro" id="IPR000982">
    <property type="entry name" value="Matrix_Paramyxo_N"/>
</dbReference>
<dbReference type="Pfam" id="PF23765">
    <property type="entry name" value="Matrix_Paramyxo_C"/>
    <property type="match status" value="1"/>
</dbReference>
<dbReference type="Pfam" id="PF00661">
    <property type="entry name" value="Matrix_Paramyxo_N"/>
    <property type="match status" value="1"/>
</dbReference>
<reference key="1">
    <citation type="journal article" date="1992" name="Arch. Virol.">
        <title>Molecular evolution of human paramyxoviruses. Nucleotide sequence analyses of the human parainfluenza type 1 virus NP and M protein genes and construction of phylogenetic trees for all the human paramyxoviruses.</title>
        <authorList>
            <person name="Miyahara K."/>
            <person name="Kitada S."/>
            <person name="Yoshimoto M."/>
            <person name="Matsumura H."/>
            <person name="Kawano M."/>
            <person name="Komada H."/>
            <person name="Tsurudome M."/>
            <person name="Kusagawa S."/>
            <person name="Nishio M."/>
            <person name="Ito Y."/>
        </authorList>
    </citation>
    <scope>NUCLEOTIDE SEQUENCE [GENOMIC RNA]</scope>
</reference>
<name>MATRX_PI1HA</name>
<evidence type="ECO:0000305" key="1"/>
<feature type="chain" id="PRO_0000142762" description="Matrix protein">
    <location>
        <begin position="1"/>
        <end position="348"/>
    </location>
</feature>
<feature type="disulfide bond" evidence="1">
    <location>
        <begin position="251"/>
        <end position="295"/>
    </location>
</feature>
<accession>P36355</accession>
<organismHost>
    <name type="scientific">Homo sapiens</name>
    <name type="common">Human</name>
    <dbReference type="NCBI Taxonomy" id="9606"/>
</organismHost>
<keyword id="KW-1015">Disulfide bond</keyword>
<keyword id="KW-0261">Viral envelope protein</keyword>
<keyword id="KW-0468">Viral matrix protein</keyword>
<keyword id="KW-0946">Virion</keyword>
<organism>
    <name type="scientific">Human parainfluenza 1 virus (strains A1426 / 86-315 / 62m-753)</name>
    <name type="common">HPIV-1</name>
    <dbReference type="NCBI Taxonomy" id="36412"/>
    <lineage>
        <taxon>Viruses</taxon>
        <taxon>Riboviria</taxon>
        <taxon>Orthornavirae</taxon>
        <taxon>Negarnaviricota</taxon>
        <taxon>Haploviricotina</taxon>
        <taxon>Monjiviricetes</taxon>
        <taxon>Mononegavirales</taxon>
        <taxon>Paramyxoviridae</taxon>
        <taxon>Feraresvirinae</taxon>
        <taxon>Respirovirus</taxon>
        <taxon>Respirovirus laryngotracheitidis</taxon>
    </lineage>
</organism>